<dbReference type="EC" id="6.2.1.5" evidence="1"/>
<dbReference type="EMBL" id="AP008232">
    <property type="protein sequence ID" value="BAE74153.1"/>
    <property type="molecule type" value="Genomic_DNA"/>
</dbReference>
<dbReference type="RefSeq" id="WP_011410715.1">
    <property type="nucleotide sequence ID" value="NC_007712.1"/>
</dbReference>
<dbReference type="SMR" id="Q2NUM2"/>
<dbReference type="STRING" id="343509.SG0878"/>
<dbReference type="KEGG" id="sgl:SG0878"/>
<dbReference type="eggNOG" id="COG0045">
    <property type="taxonomic scope" value="Bacteria"/>
</dbReference>
<dbReference type="HOGENOM" id="CLU_037430_0_2_6"/>
<dbReference type="OrthoDB" id="9802602at2"/>
<dbReference type="BioCyc" id="SGLO343509:SGP1_RS07530-MONOMER"/>
<dbReference type="UniPathway" id="UPA00223">
    <property type="reaction ID" value="UER00999"/>
</dbReference>
<dbReference type="Proteomes" id="UP000001932">
    <property type="component" value="Chromosome"/>
</dbReference>
<dbReference type="GO" id="GO:0005829">
    <property type="term" value="C:cytosol"/>
    <property type="evidence" value="ECO:0007669"/>
    <property type="project" value="TreeGrafter"/>
</dbReference>
<dbReference type="GO" id="GO:0042709">
    <property type="term" value="C:succinate-CoA ligase complex"/>
    <property type="evidence" value="ECO:0007669"/>
    <property type="project" value="TreeGrafter"/>
</dbReference>
<dbReference type="GO" id="GO:0005524">
    <property type="term" value="F:ATP binding"/>
    <property type="evidence" value="ECO:0007669"/>
    <property type="project" value="UniProtKB-UniRule"/>
</dbReference>
<dbReference type="GO" id="GO:0000287">
    <property type="term" value="F:magnesium ion binding"/>
    <property type="evidence" value="ECO:0007669"/>
    <property type="project" value="UniProtKB-UniRule"/>
</dbReference>
<dbReference type="GO" id="GO:0004775">
    <property type="term" value="F:succinate-CoA ligase (ADP-forming) activity"/>
    <property type="evidence" value="ECO:0007669"/>
    <property type="project" value="UniProtKB-UniRule"/>
</dbReference>
<dbReference type="GO" id="GO:0004776">
    <property type="term" value="F:succinate-CoA ligase (GDP-forming) activity"/>
    <property type="evidence" value="ECO:0007669"/>
    <property type="project" value="RHEA"/>
</dbReference>
<dbReference type="GO" id="GO:0006104">
    <property type="term" value="P:succinyl-CoA metabolic process"/>
    <property type="evidence" value="ECO:0007669"/>
    <property type="project" value="TreeGrafter"/>
</dbReference>
<dbReference type="GO" id="GO:0006099">
    <property type="term" value="P:tricarboxylic acid cycle"/>
    <property type="evidence" value="ECO:0007669"/>
    <property type="project" value="UniProtKB-UniRule"/>
</dbReference>
<dbReference type="FunFam" id="3.30.1490.20:FF:000002">
    <property type="entry name" value="Succinate--CoA ligase [ADP-forming] subunit beta"/>
    <property type="match status" value="1"/>
</dbReference>
<dbReference type="FunFam" id="3.30.470.20:FF:000002">
    <property type="entry name" value="Succinate--CoA ligase [ADP-forming] subunit beta"/>
    <property type="match status" value="1"/>
</dbReference>
<dbReference type="FunFam" id="3.40.50.261:FF:000001">
    <property type="entry name" value="Succinate--CoA ligase [ADP-forming] subunit beta"/>
    <property type="match status" value="1"/>
</dbReference>
<dbReference type="Gene3D" id="3.30.1490.20">
    <property type="entry name" value="ATP-grasp fold, A domain"/>
    <property type="match status" value="1"/>
</dbReference>
<dbReference type="Gene3D" id="3.30.470.20">
    <property type="entry name" value="ATP-grasp fold, B domain"/>
    <property type="match status" value="1"/>
</dbReference>
<dbReference type="Gene3D" id="3.40.50.261">
    <property type="entry name" value="Succinyl-CoA synthetase domains"/>
    <property type="match status" value="1"/>
</dbReference>
<dbReference type="HAMAP" id="MF_00558">
    <property type="entry name" value="Succ_CoA_beta"/>
    <property type="match status" value="1"/>
</dbReference>
<dbReference type="InterPro" id="IPR011761">
    <property type="entry name" value="ATP-grasp"/>
</dbReference>
<dbReference type="InterPro" id="IPR013650">
    <property type="entry name" value="ATP-grasp_succ-CoA_synth-type"/>
</dbReference>
<dbReference type="InterPro" id="IPR013815">
    <property type="entry name" value="ATP_grasp_subdomain_1"/>
</dbReference>
<dbReference type="InterPro" id="IPR017866">
    <property type="entry name" value="Succ-CoA_synthase_bsu_CS"/>
</dbReference>
<dbReference type="InterPro" id="IPR005811">
    <property type="entry name" value="SUCC_ACL_C"/>
</dbReference>
<dbReference type="InterPro" id="IPR005809">
    <property type="entry name" value="Succ_CoA_ligase-like_bsu"/>
</dbReference>
<dbReference type="InterPro" id="IPR016102">
    <property type="entry name" value="Succinyl-CoA_synth-like"/>
</dbReference>
<dbReference type="NCBIfam" id="NF001913">
    <property type="entry name" value="PRK00696.1"/>
    <property type="match status" value="1"/>
</dbReference>
<dbReference type="NCBIfam" id="TIGR01016">
    <property type="entry name" value="sucCoAbeta"/>
    <property type="match status" value="1"/>
</dbReference>
<dbReference type="PANTHER" id="PTHR11815:SF10">
    <property type="entry name" value="SUCCINATE--COA LIGASE [GDP-FORMING] SUBUNIT BETA, MITOCHONDRIAL"/>
    <property type="match status" value="1"/>
</dbReference>
<dbReference type="PANTHER" id="PTHR11815">
    <property type="entry name" value="SUCCINYL-COA SYNTHETASE BETA CHAIN"/>
    <property type="match status" value="1"/>
</dbReference>
<dbReference type="Pfam" id="PF08442">
    <property type="entry name" value="ATP-grasp_2"/>
    <property type="match status" value="1"/>
</dbReference>
<dbReference type="Pfam" id="PF00549">
    <property type="entry name" value="Ligase_CoA"/>
    <property type="match status" value="1"/>
</dbReference>
<dbReference type="PIRSF" id="PIRSF001554">
    <property type="entry name" value="SucCS_beta"/>
    <property type="match status" value="1"/>
</dbReference>
<dbReference type="SUPFAM" id="SSF56059">
    <property type="entry name" value="Glutathione synthetase ATP-binding domain-like"/>
    <property type="match status" value="1"/>
</dbReference>
<dbReference type="SUPFAM" id="SSF52210">
    <property type="entry name" value="Succinyl-CoA synthetase domains"/>
    <property type="match status" value="1"/>
</dbReference>
<dbReference type="PROSITE" id="PS50975">
    <property type="entry name" value="ATP_GRASP"/>
    <property type="match status" value="1"/>
</dbReference>
<dbReference type="PROSITE" id="PS01217">
    <property type="entry name" value="SUCCINYL_COA_LIG_3"/>
    <property type="match status" value="1"/>
</dbReference>
<evidence type="ECO:0000255" key="1">
    <source>
        <dbReference type="HAMAP-Rule" id="MF_00558"/>
    </source>
</evidence>
<proteinExistence type="inferred from homology"/>
<comment type="function">
    <text evidence="1">Succinyl-CoA synthetase functions in the citric acid cycle (TCA), coupling the hydrolysis of succinyl-CoA to the synthesis of either ATP or GTP and thus represents the only step of substrate-level phosphorylation in the TCA. The beta subunit provides nucleotide specificity of the enzyme and binds the substrate succinate, while the binding sites for coenzyme A and phosphate are found in the alpha subunit.</text>
</comment>
<comment type="catalytic activity">
    <reaction evidence="1">
        <text>succinate + ATP + CoA = succinyl-CoA + ADP + phosphate</text>
        <dbReference type="Rhea" id="RHEA:17661"/>
        <dbReference type="ChEBI" id="CHEBI:30031"/>
        <dbReference type="ChEBI" id="CHEBI:30616"/>
        <dbReference type="ChEBI" id="CHEBI:43474"/>
        <dbReference type="ChEBI" id="CHEBI:57287"/>
        <dbReference type="ChEBI" id="CHEBI:57292"/>
        <dbReference type="ChEBI" id="CHEBI:456216"/>
        <dbReference type="EC" id="6.2.1.5"/>
    </reaction>
    <physiologicalReaction direction="right-to-left" evidence="1">
        <dbReference type="Rhea" id="RHEA:17663"/>
    </physiologicalReaction>
</comment>
<comment type="catalytic activity">
    <reaction evidence="1">
        <text>GTP + succinate + CoA = succinyl-CoA + GDP + phosphate</text>
        <dbReference type="Rhea" id="RHEA:22120"/>
        <dbReference type="ChEBI" id="CHEBI:30031"/>
        <dbReference type="ChEBI" id="CHEBI:37565"/>
        <dbReference type="ChEBI" id="CHEBI:43474"/>
        <dbReference type="ChEBI" id="CHEBI:57287"/>
        <dbReference type="ChEBI" id="CHEBI:57292"/>
        <dbReference type="ChEBI" id="CHEBI:58189"/>
    </reaction>
    <physiologicalReaction direction="right-to-left" evidence="1">
        <dbReference type="Rhea" id="RHEA:22122"/>
    </physiologicalReaction>
</comment>
<comment type="cofactor">
    <cofactor evidence="1">
        <name>Mg(2+)</name>
        <dbReference type="ChEBI" id="CHEBI:18420"/>
    </cofactor>
    <text evidence="1">Binds 1 Mg(2+) ion per subunit.</text>
</comment>
<comment type="pathway">
    <text evidence="1">Carbohydrate metabolism; tricarboxylic acid cycle; succinate from succinyl-CoA (ligase route): step 1/1.</text>
</comment>
<comment type="subunit">
    <text evidence="1">Heterotetramer of two alpha and two beta subunits.</text>
</comment>
<comment type="similarity">
    <text evidence="1">Belongs to the succinate/malate CoA ligase beta subunit family.</text>
</comment>
<name>SUCC_SODGM</name>
<reference key="1">
    <citation type="journal article" date="2006" name="Genome Res.">
        <title>Massive genome erosion and functional adaptations provide insights into the symbiotic lifestyle of Sodalis glossinidius in the tsetse host.</title>
        <authorList>
            <person name="Toh H."/>
            <person name="Weiss B.L."/>
            <person name="Perkin S.A.H."/>
            <person name="Yamashita A."/>
            <person name="Oshima K."/>
            <person name="Hattori M."/>
            <person name="Aksoy S."/>
        </authorList>
    </citation>
    <scope>NUCLEOTIDE SEQUENCE [LARGE SCALE GENOMIC DNA]</scope>
    <source>
        <strain>morsitans</strain>
    </source>
</reference>
<gene>
    <name evidence="1" type="primary">sucC</name>
    <name type="ordered locus">SG0878</name>
</gene>
<keyword id="KW-0067">ATP-binding</keyword>
<keyword id="KW-0436">Ligase</keyword>
<keyword id="KW-0460">Magnesium</keyword>
<keyword id="KW-0479">Metal-binding</keyword>
<keyword id="KW-0547">Nucleotide-binding</keyword>
<keyword id="KW-0816">Tricarboxylic acid cycle</keyword>
<sequence>MNLHEYQAKQLFARYGLPAPTGYACNTLREAEESASKIGAGPWVVKCQVHAGGRGKSGGVKVVKLKEEIRAFAEQWLGKRLVTYQTDALGQPVNQILVEVATDIAKELYLGVVVDRGTRRVVFMASTEGGVEIEKVAEETPHLIHKVALDPLTGPQPYQGRELAFKLGLSGKQVSQFSKIFMGLATLFLERDLALVEINPLVITGAGDLICLDGKLSADGNALFRQPELREMRDHSQEDEREAHATQLELNYVALDGNIGCMVNGAGLAMGTMDIVKLHGGEPANFLDVGGGATKERVTEAFKIILSDEKVKAVLVNIFGGIVRCDLIADGIIGAVSEVGVSVPVVVRLEGNNAELGAKRLADSGLNIIAATSLTDAAQQVVAAVEGK</sequence>
<organism>
    <name type="scientific">Sodalis glossinidius (strain morsitans)</name>
    <dbReference type="NCBI Taxonomy" id="343509"/>
    <lineage>
        <taxon>Bacteria</taxon>
        <taxon>Pseudomonadati</taxon>
        <taxon>Pseudomonadota</taxon>
        <taxon>Gammaproteobacteria</taxon>
        <taxon>Enterobacterales</taxon>
        <taxon>Bruguierivoracaceae</taxon>
        <taxon>Sodalis</taxon>
    </lineage>
</organism>
<accession>Q2NUM2</accession>
<feature type="chain" id="PRO_1000082237" description="Succinate--CoA ligase [ADP-forming] subunit beta">
    <location>
        <begin position="1"/>
        <end position="388"/>
    </location>
</feature>
<feature type="domain" description="ATP-grasp" evidence="1">
    <location>
        <begin position="9"/>
        <end position="244"/>
    </location>
</feature>
<feature type="binding site" evidence="1">
    <location>
        <position position="46"/>
    </location>
    <ligand>
        <name>ATP</name>
        <dbReference type="ChEBI" id="CHEBI:30616"/>
    </ligand>
</feature>
<feature type="binding site" evidence="1">
    <location>
        <begin position="53"/>
        <end position="55"/>
    </location>
    <ligand>
        <name>ATP</name>
        <dbReference type="ChEBI" id="CHEBI:30616"/>
    </ligand>
</feature>
<feature type="binding site" evidence="1">
    <location>
        <position position="99"/>
    </location>
    <ligand>
        <name>ATP</name>
        <dbReference type="ChEBI" id="CHEBI:30616"/>
    </ligand>
</feature>
<feature type="binding site" evidence="1">
    <location>
        <position position="102"/>
    </location>
    <ligand>
        <name>ATP</name>
        <dbReference type="ChEBI" id="CHEBI:30616"/>
    </ligand>
</feature>
<feature type="binding site" evidence="1">
    <location>
        <position position="107"/>
    </location>
    <ligand>
        <name>ATP</name>
        <dbReference type="ChEBI" id="CHEBI:30616"/>
    </ligand>
</feature>
<feature type="binding site" evidence="1">
    <location>
        <position position="199"/>
    </location>
    <ligand>
        <name>Mg(2+)</name>
        <dbReference type="ChEBI" id="CHEBI:18420"/>
    </ligand>
</feature>
<feature type="binding site" evidence="1">
    <location>
        <position position="213"/>
    </location>
    <ligand>
        <name>Mg(2+)</name>
        <dbReference type="ChEBI" id="CHEBI:18420"/>
    </ligand>
</feature>
<feature type="binding site" evidence="1">
    <location>
        <position position="264"/>
    </location>
    <ligand>
        <name>substrate</name>
        <note>ligand shared with subunit alpha</note>
    </ligand>
</feature>
<feature type="binding site" evidence="1">
    <location>
        <begin position="321"/>
        <end position="323"/>
    </location>
    <ligand>
        <name>substrate</name>
        <note>ligand shared with subunit alpha</note>
    </ligand>
</feature>
<protein>
    <recommendedName>
        <fullName evidence="1">Succinate--CoA ligase [ADP-forming] subunit beta</fullName>
        <ecNumber evidence="1">6.2.1.5</ecNumber>
    </recommendedName>
    <alternativeName>
        <fullName evidence="1">Succinyl-CoA synthetase subunit beta</fullName>
        <shortName evidence="1">SCS-beta</shortName>
    </alternativeName>
</protein>